<evidence type="ECO:0000255" key="1">
    <source>
        <dbReference type="PROSITE-ProRule" id="PRU00805"/>
    </source>
</evidence>
<evidence type="ECO:0000269" key="2">
    <source>
    </source>
</evidence>
<evidence type="ECO:0000303" key="3">
    <source>
    </source>
</evidence>
<evidence type="ECO:0000305" key="4"/>
<organism>
    <name type="scientific">Emericella nidulans (strain FGSC A4 / ATCC 38163 / CBS 112.46 / NRRL 194 / M139)</name>
    <name type="common">Aspergillus nidulans</name>
    <dbReference type="NCBI Taxonomy" id="227321"/>
    <lineage>
        <taxon>Eukaryota</taxon>
        <taxon>Fungi</taxon>
        <taxon>Dikarya</taxon>
        <taxon>Ascomycota</taxon>
        <taxon>Pezizomycotina</taxon>
        <taxon>Eurotiomycetes</taxon>
        <taxon>Eurotiomycetidae</taxon>
        <taxon>Eurotiales</taxon>
        <taxon>Aspergillaceae</taxon>
        <taxon>Aspergillus</taxon>
        <taxon>Aspergillus subgen. Nidulantes</taxon>
    </lineage>
</organism>
<feature type="chain" id="PRO_0000443344" description="2-oxoglutarate-Fe(II) type oxidoreductase hxnY">
    <location>
        <begin position="1"/>
        <end position="349"/>
    </location>
</feature>
<feature type="domain" description="Fe2OG dioxygenase" evidence="1">
    <location>
        <begin position="178"/>
        <end position="282"/>
    </location>
</feature>
<feature type="binding site" evidence="1">
    <location>
        <position position="205"/>
    </location>
    <ligand>
        <name>Fe cation</name>
        <dbReference type="ChEBI" id="CHEBI:24875"/>
    </ligand>
</feature>
<feature type="binding site" evidence="1">
    <location>
        <position position="207"/>
    </location>
    <ligand>
        <name>Fe cation</name>
        <dbReference type="ChEBI" id="CHEBI:24875"/>
    </ligand>
</feature>
<feature type="binding site" evidence="1">
    <location>
        <position position="263"/>
    </location>
    <ligand>
        <name>Fe cation</name>
        <dbReference type="ChEBI" id="CHEBI:24875"/>
    </ligand>
</feature>
<feature type="binding site" evidence="1">
    <location>
        <position position="273"/>
    </location>
    <ligand>
        <name>2-oxoglutarate</name>
        <dbReference type="ChEBI" id="CHEBI:16810"/>
    </ligand>
</feature>
<protein>
    <recommendedName>
        <fullName evidence="4">2-oxoglutarate-Fe(II) type oxidoreductase hxnY</fullName>
        <ecNumber evidence="1">1.14.11.-</ecNumber>
    </recommendedName>
    <alternativeName>
        <fullName evidence="3">Nicotinate catabolism cluster protein hxnY</fullName>
    </alternativeName>
</protein>
<accession>C8VK14</accession>
<dbReference type="EC" id="1.14.11.-" evidence="1"/>
<dbReference type="EMBL" id="BN001306">
    <property type="protein sequence ID" value="CBF82386.1"/>
    <property type="molecule type" value="Genomic_DNA"/>
</dbReference>
<dbReference type="SMR" id="C8VK14"/>
<dbReference type="STRING" id="227321.C8VK14"/>
<dbReference type="EnsemblFungi" id="CBF82386">
    <property type="protein sequence ID" value="CBF82386"/>
    <property type="gene ID" value="ANIA_11188"/>
</dbReference>
<dbReference type="VEuPathDB" id="FungiDB:AN11188"/>
<dbReference type="eggNOG" id="KOG0143">
    <property type="taxonomic scope" value="Eukaryota"/>
</dbReference>
<dbReference type="HOGENOM" id="CLU_010119_6_3_1"/>
<dbReference type="InParanoid" id="C8VK14"/>
<dbReference type="OMA" id="NNTWNRG"/>
<dbReference type="OrthoDB" id="288590at2759"/>
<dbReference type="Proteomes" id="UP000000560">
    <property type="component" value="Chromosome VI"/>
</dbReference>
<dbReference type="GO" id="GO:0016706">
    <property type="term" value="F:2-oxoglutarate-dependent dioxygenase activity"/>
    <property type="evidence" value="ECO:0000318"/>
    <property type="project" value="GO_Central"/>
</dbReference>
<dbReference type="GO" id="GO:0046872">
    <property type="term" value="F:metal ion binding"/>
    <property type="evidence" value="ECO:0007669"/>
    <property type="project" value="UniProtKB-KW"/>
</dbReference>
<dbReference type="GO" id="GO:0044283">
    <property type="term" value="P:small molecule biosynthetic process"/>
    <property type="evidence" value="ECO:0007669"/>
    <property type="project" value="UniProtKB-ARBA"/>
</dbReference>
<dbReference type="FunFam" id="2.60.120.330:FF:000006">
    <property type="entry name" value="2-oxoglutarate-Fe(II) type oxidoreductase hxnY"/>
    <property type="match status" value="1"/>
</dbReference>
<dbReference type="Gene3D" id="2.60.120.330">
    <property type="entry name" value="B-lactam Antibiotic, Isopenicillin N Synthase, Chain"/>
    <property type="match status" value="1"/>
</dbReference>
<dbReference type="InterPro" id="IPR026992">
    <property type="entry name" value="DIOX_N"/>
</dbReference>
<dbReference type="InterPro" id="IPR044861">
    <property type="entry name" value="IPNS-like_FE2OG_OXY"/>
</dbReference>
<dbReference type="InterPro" id="IPR027443">
    <property type="entry name" value="IPNS-like_sf"/>
</dbReference>
<dbReference type="InterPro" id="IPR050231">
    <property type="entry name" value="Iron_ascorbate_oxido_reductase"/>
</dbReference>
<dbReference type="InterPro" id="IPR005123">
    <property type="entry name" value="Oxoglu/Fe-dep_dioxygenase_dom"/>
</dbReference>
<dbReference type="PANTHER" id="PTHR47990">
    <property type="entry name" value="2-OXOGLUTARATE (2OG) AND FE(II)-DEPENDENT OXYGENASE SUPERFAMILY PROTEIN-RELATED"/>
    <property type="match status" value="1"/>
</dbReference>
<dbReference type="Pfam" id="PF03171">
    <property type="entry name" value="2OG-FeII_Oxy"/>
    <property type="match status" value="1"/>
</dbReference>
<dbReference type="Pfam" id="PF14226">
    <property type="entry name" value="DIOX_N"/>
    <property type="match status" value="1"/>
</dbReference>
<dbReference type="PRINTS" id="PR00682">
    <property type="entry name" value="IPNSYNTHASE"/>
</dbReference>
<dbReference type="SUPFAM" id="SSF51197">
    <property type="entry name" value="Clavaminate synthase-like"/>
    <property type="match status" value="1"/>
</dbReference>
<dbReference type="PROSITE" id="PS51471">
    <property type="entry name" value="FE2OG_OXY"/>
    <property type="match status" value="1"/>
</dbReference>
<reference key="1">
    <citation type="journal article" date="2005" name="Nature">
        <title>Sequencing of Aspergillus nidulans and comparative analysis with A. fumigatus and A. oryzae.</title>
        <authorList>
            <person name="Galagan J.E."/>
            <person name="Calvo S.E."/>
            <person name="Cuomo C."/>
            <person name="Ma L.-J."/>
            <person name="Wortman J.R."/>
            <person name="Batzoglou S."/>
            <person name="Lee S.-I."/>
            <person name="Bastuerkmen M."/>
            <person name="Spevak C.C."/>
            <person name="Clutterbuck J."/>
            <person name="Kapitonov V."/>
            <person name="Jurka J."/>
            <person name="Scazzocchio C."/>
            <person name="Farman M.L."/>
            <person name="Butler J."/>
            <person name="Purcell S."/>
            <person name="Harris S."/>
            <person name="Braus G.H."/>
            <person name="Draht O."/>
            <person name="Busch S."/>
            <person name="D'Enfert C."/>
            <person name="Bouchier C."/>
            <person name="Goldman G.H."/>
            <person name="Bell-Pedersen D."/>
            <person name="Griffiths-Jones S."/>
            <person name="Doonan J.H."/>
            <person name="Yu J."/>
            <person name="Vienken K."/>
            <person name="Pain A."/>
            <person name="Freitag M."/>
            <person name="Selker E.U."/>
            <person name="Archer D.B."/>
            <person name="Penalva M.A."/>
            <person name="Oakley B.R."/>
            <person name="Momany M."/>
            <person name="Tanaka T."/>
            <person name="Kumagai T."/>
            <person name="Asai K."/>
            <person name="Machida M."/>
            <person name="Nierman W.C."/>
            <person name="Denning D.W."/>
            <person name="Caddick M.X."/>
            <person name="Hynes M."/>
            <person name="Paoletti M."/>
            <person name="Fischer R."/>
            <person name="Miller B.L."/>
            <person name="Dyer P.S."/>
            <person name="Sachs M.S."/>
            <person name="Osmani S.A."/>
            <person name="Birren B.W."/>
        </authorList>
    </citation>
    <scope>NUCLEOTIDE SEQUENCE [LARGE SCALE GENOMIC DNA]</scope>
    <source>
        <strain>FGSC A4 / ATCC 38163 / CBS 112.46 / NRRL 194 / M139</strain>
    </source>
</reference>
<reference key="2">
    <citation type="journal article" date="2009" name="Fungal Genet. Biol.">
        <title>The 2008 update of the Aspergillus nidulans genome annotation: a community effort.</title>
        <authorList>
            <person name="Wortman J.R."/>
            <person name="Gilsenan J.M."/>
            <person name="Joardar V."/>
            <person name="Deegan J."/>
            <person name="Clutterbuck J."/>
            <person name="Andersen M.R."/>
            <person name="Archer D."/>
            <person name="Bencina M."/>
            <person name="Braus G."/>
            <person name="Coutinho P."/>
            <person name="von Dohren H."/>
            <person name="Doonan J."/>
            <person name="Driessen A.J."/>
            <person name="Durek P."/>
            <person name="Espeso E."/>
            <person name="Fekete E."/>
            <person name="Flipphi M."/>
            <person name="Estrada C.G."/>
            <person name="Geysens S."/>
            <person name="Goldman G."/>
            <person name="de Groot P.W."/>
            <person name="Hansen K."/>
            <person name="Harris S.D."/>
            <person name="Heinekamp T."/>
            <person name="Helmstaedt K."/>
            <person name="Henrissat B."/>
            <person name="Hofmann G."/>
            <person name="Homan T."/>
            <person name="Horio T."/>
            <person name="Horiuchi H."/>
            <person name="James S."/>
            <person name="Jones M."/>
            <person name="Karaffa L."/>
            <person name="Karanyi Z."/>
            <person name="Kato M."/>
            <person name="Keller N."/>
            <person name="Kelly D.E."/>
            <person name="Kiel J.A."/>
            <person name="Kim J.M."/>
            <person name="van der Klei I.J."/>
            <person name="Klis F.M."/>
            <person name="Kovalchuk A."/>
            <person name="Krasevec N."/>
            <person name="Kubicek C.P."/>
            <person name="Liu B."/>
            <person name="Maccabe A."/>
            <person name="Meyer V."/>
            <person name="Mirabito P."/>
            <person name="Miskei M."/>
            <person name="Mos M."/>
            <person name="Mullins J."/>
            <person name="Nelson D.R."/>
            <person name="Nielsen J."/>
            <person name="Oakley B.R."/>
            <person name="Osmani S.A."/>
            <person name="Pakula T."/>
            <person name="Paszewski A."/>
            <person name="Paulsen I."/>
            <person name="Pilsyk S."/>
            <person name="Pocsi I."/>
            <person name="Punt P.J."/>
            <person name="Ram A.F."/>
            <person name="Ren Q."/>
            <person name="Robellet X."/>
            <person name="Robson G."/>
            <person name="Seiboth B."/>
            <person name="van Solingen P."/>
            <person name="Specht T."/>
            <person name="Sun J."/>
            <person name="Taheri-Talesh N."/>
            <person name="Takeshita N."/>
            <person name="Ussery D."/>
            <person name="vanKuyk P.A."/>
            <person name="Visser H."/>
            <person name="van de Vondervoort P.J."/>
            <person name="de Vries R.P."/>
            <person name="Walton J."/>
            <person name="Xiang X."/>
            <person name="Xiong Y."/>
            <person name="Zeng A.P."/>
            <person name="Brandt B.W."/>
            <person name="Cornell M.J."/>
            <person name="van den Hondel C.A."/>
            <person name="Visser J."/>
            <person name="Oliver S.G."/>
            <person name="Turner G."/>
        </authorList>
    </citation>
    <scope>GENOME REANNOTATION</scope>
    <source>
        <strain>FGSC A4 / ATCC 38163 / CBS 112.46 / NRRL 194 / M139</strain>
    </source>
</reference>
<reference key="3">
    <citation type="journal article" date="2017" name="Open Biol.">
        <title>A eukaryotic nicotinate-inducible gene cluster: convergent evolution in fungi and bacteria.</title>
        <authorList>
            <person name="Amon J."/>
            <person name="Fernandez-Martin R."/>
            <person name="Bokor E."/>
            <person name="Cultrone A."/>
            <person name="Kelly J.M."/>
            <person name="Flipphi M."/>
            <person name="Scazzocchio C."/>
            <person name="Hamari Z."/>
        </authorList>
    </citation>
    <scope>IDENTIFICATION</scope>
    <scope>INDUCTION</scope>
    <scope>FUNCTION</scope>
</reference>
<gene>
    <name evidence="3" type="primary">hxnY</name>
    <name type="ORF">ANIA_11188</name>
</gene>
<sequence>MAPTAPPILDFSPFYGTDGAAKAKLVQQVRESCEYNGFFQITGHRIPRELQVRVMDAAKRFFALPLEEKMAIDKNLNSFNRGYELLRSQMLEVGTAPELKEGLYIGEEIGADHPYYINGRLNSGPNQWPATVPDAQEFRETSMEYYHAVYELAKDVLAVLALTLDVEESFFDPLTEGGVATMRMLHYPSQPKDEDEKLNRGIGAHTDFGCITLLLQDEVDGLQVLDAPSGQWLDVQPVLGAYVVNLGDLMMRMANDRYKSNIHRVINKSGRERYSIPFFFSGNPDHVCKCLPNCCKAGEQPKYPPITVEDMVRGAYKQSYGRAEAYKKELAEKAKAHKIEAASATAMVS</sequence>
<proteinExistence type="evidence at transcript level"/>
<comment type="function">
    <text evidence="2">2-oxoglutarate-Fe(II) type oxidoreductase, part of the hnx cluster involved in the purine degradation (PubMed:29212709). The nicotinate hydroxylase hnxS accepts nicotinate as a substrate and catalyzes the first step of nicotinate catabolism (PubMed:29212709). The major facilitator-type transporters hxnP and hxnZ are probably involved in the uptake of nicotinate-derived metabolites, and the oxidoreductases hxnT and hxnY in the further metabolism of 6-OH nicotinic acid (PubMed:29212709).</text>
</comment>
<comment type="cofactor">
    <cofactor evidence="1">
        <name>Fe(2+)</name>
        <dbReference type="ChEBI" id="CHEBI:29033"/>
    </cofactor>
    <text evidence="1">Binds 1 Fe(2+) ion per subunit.</text>
</comment>
<comment type="induction">
    <text evidence="2">Expression is induced by nicotinate and 6-OH nicotinate, subject to nitrogen metabolite repression mediated by the GATA factor areA, and strictly regulated by the cluster-specific transcription regulator hnxR (PubMed:29212709).</text>
</comment>
<comment type="similarity">
    <text evidence="4">Belongs to the iron/ascorbate-dependent oxidoreductase family.</text>
</comment>
<name>HXNY_EMENI</name>
<keyword id="KW-0223">Dioxygenase</keyword>
<keyword id="KW-0408">Iron</keyword>
<keyword id="KW-0479">Metal-binding</keyword>
<keyword id="KW-0560">Oxidoreductase</keyword>
<keyword id="KW-1185">Reference proteome</keyword>